<name>EFG_PARM1</name>
<reference key="1">
    <citation type="journal article" date="2005" name="DNA Res.">
        <title>Complete genome sequence of the facultative anaerobic magnetotactic bacterium Magnetospirillum sp. strain AMB-1.</title>
        <authorList>
            <person name="Matsunaga T."/>
            <person name="Okamura Y."/>
            <person name="Fukuda Y."/>
            <person name="Wahyudi A.T."/>
            <person name="Murase Y."/>
            <person name="Takeyama H."/>
        </authorList>
    </citation>
    <scope>NUCLEOTIDE SEQUENCE [LARGE SCALE GENOMIC DNA]</scope>
    <source>
        <strain>ATCC 700264 / AMB-1</strain>
    </source>
</reference>
<keyword id="KW-0963">Cytoplasm</keyword>
<keyword id="KW-0251">Elongation factor</keyword>
<keyword id="KW-0342">GTP-binding</keyword>
<keyword id="KW-0547">Nucleotide-binding</keyword>
<keyword id="KW-0648">Protein biosynthesis</keyword>
<dbReference type="EMBL" id="AP007255">
    <property type="protein sequence ID" value="BAE51937.1"/>
    <property type="molecule type" value="Genomic_DNA"/>
</dbReference>
<dbReference type="RefSeq" id="WP_011385500.1">
    <property type="nucleotide sequence ID" value="NC_007626.1"/>
</dbReference>
<dbReference type="SMR" id="Q2W2I8"/>
<dbReference type="STRING" id="342108.amb3133"/>
<dbReference type="KEGG" id="mag:amb3133"/>
<dbReference type="HOGENOM" id="CLU_002794_4_2_5"/>
<dbReference type="OrthoDB" id="9802948at2"/>
<dbReference type="Proteomes" id="UP000007058">
    <property type="component" value="Chromosome"/>
</dbReference>
<dbReference type="GO" id="GO:0005737">
    <property type="term" value="C:cytoplasm"/>
    <property type="evidence" value="ECO:0007669"/>
    <property type="project" value="UniProtKB-SubCell"/>
</dbReference>
<dbReference type="GO" id="GO:0005525">
    <property type="term" value="F:GTP binding"/>
    <property type="evidence" value="ECO:0007669"/>
    <property type="project" value="UniProtKB-UniRule"/>
</dbReference>
<dbReference type="GO" id="GO:0003924">
    <property type="term" value="F:GTPase activity"/>
    <property type="evidence" value="ECO:0007669"/>
    <property type="project" value="InterPro"/>
</dbReference>
<dbReference type="GO" id="GO:0097216">
    <property type="term" value="F:guanosine tetraphosphate binding"/>
    <property type="evidence" value="ECO:0007669"/>
    <property type="project" value="UniProtKB-ARBA"/>
</dbReference>
<dbReference type="GO" id="GO:0003746">
    <property type="term" value="F:translation elongation factor activity"/>
    <property type="evidence" value="ECO:0007669"/>
    <property type="project" value="UniProtKB-UniRule"/>
</dbReference>
<dbReference type="GO" id="GO:0032790">
    <property type="term" value="P:ribosome disassembly"/>
    <property type="evidence" value="ECO:0007669"/>
    <property type="project" value="TreeGrafter"/>
</dbReference>
<dbReference type="CDD" id="cd01886">
    <property type="entry name" value="EF-G"/>
    <property type="match status" value="1"/>
</dbReference>
<dbReference type="CDD" id="cd16262">
    <property type="entry name" value="EFG_III"/>
    <property type="match status" value="1"/>
</dbReference>
<dbReference type="CDD" id="cd01434">
    <property type="entry name" value="EFG_mtEFG1_IV"/>
    <property type="match status" value="1"/>
</dbReference>
<dbReference type="CDD" id="cd03713">
    <property type="entry name" value="EFG_mtEFG_C"/>
    <property type="match status" value="1"/>
</dbReference>
<dbReference type="CDD" id="cd04088">
    <property type="entry name" value="EFG_mtEFG_II"/>
    <property type="match status" value="1"/>
</dbReference>
<dbReference type="FunFam" id="2.40.30.10:FF:000006">
    <property type="entry name" value="Elongation factor G"/>
    <property type="match status" value="1"/>
</dbReference>
<dbReference type="FunFam" id="3.30.230.10:FF:000003">
    <property type="entry name" value="Elongation factor G"/>
    <property type="match status" value="1"/>
</dbReference>
<dbReference type="FunFam" id="3.30.70.240:FF:000001">
    <property type="entry name" value="Elongation factor G"/>
    <property type="match status" value="1"/>
</dbReference>
<dbReference type="FunFam" id="3.30.70.870:FF:000001">
    <property type="entry name" value="Elongation factor G"/>
    <property type="match status" value="1"/>
</dbReference>
<dbReference type="FunFam" id="3.40.50.300:FF:000029">
    <property type="entry name" value="Elongation factor G"/>
    <property type="match status" value="1"/>
</dbReference>
<dbReference type="Gene3D" id="3.30.230.10">
    <property type="match status" value="1"/>
</dbReference>
<dbReference type="Gene3D" id="3.30.70.240">
    <property type="match status" value="1"/>
</dbReference>
<dbReference type="Gene3D" id="3.30.70.870">
    <property type="entry name" value="Elongation Factor G (Translational Gtpase), domain 3"/>
    <property type="match status" value="1"/>
</dbReference>
<dbReference type="Gene3D" id="3.40.50.300">
    <property type="entry name" value="P-loop containing nucleotide triphosphate hydrolases"/>
    <property type="match status" value="1"/>
</dbReference>
<dbReference type="Gene3D" id="2.40.30.10">
    <property type="entry name" value="Translation factors"/>
    <property type="match status" value="1"/>
</dbReference>
<dbReference type="HAMAP" id="MF_00054_B">
    <property type="entry name" value="EF_G_EF_2_B"/>
    <property type="match status" value="1"/>
</dbReference>
<dbReference type="InterPro" id="IPR041095">
    <property type="entry name" value="EFG_II"/>
</dbReference>
<dbReference type="InterPro" id="IPR009022">
    <property type="entry name" value="EFG_III"/>
</dbReference>
<dbReference type="InterPro" id="IPR035647">
    <property type="entry name" value="EFG_III/V"/>
</dbReference>
<dbReference type="InterPro" id="IPR047872">
    <property type="entry name" value="EFG_IV"/>
</dbReference>
<dbReference type="InterPro" id="IPR035649">
    <property type="entry name" value="EFG_V"/>
</dbReference>
<dbReference type="InterPro" id="IPR000640">
    <property type="entry name" value="EFG_V-like"/>
</dbReference>
<dbReference type="InterPro" id="IPR004161">
    <property type="entry name" value="EFTu-like_2"/>
</dbReference>
<dbReference type="InterPro" id="IPR031157">
    <property type="entry name" value="G_TR_CS"/>
</dbReference>
<dbReference type="InterPro" id="IPR027417">
    <property type="entry name" value="P-loop_NTPase"/>
</dbReference>
<dbReference type="InterPro" id="IPR020568">
    <property type="entry name" value="Ribosomal_Su5_D2-typ_SF"/>
</dbReference>
<dbReference type="InterPro" id="IPR014721">
    <property type="entry name" value="Ribsml_uS5_D2-typ_fold_subgr"/>
</dbReference>
<dbReference type="InterPro" id="IPR005225">
    <property type="entry name" value="Small_GTP-bd"/>
</dbReference>
<dbReference type="InterPro" id="IPR000795">
    <property type="entry name" value="T_Tr_GTP-bd_dom"/>
</dbReference>
<dbReference type="InterPro" id="IPR009000">
    <property type="entry name" value="Transl_B-barrel_sf"/>
</dbReference>
<dbReference type="InterPro" id="IPR004540">
    <property type="entry name" value="Transl_elong_EFG/EF2"/>
</dbReference>
<dbReference type="InterPro" id="IPR005517">
    <property type="entry name" value="Transl_elong_EFG/EF2_IV"/>
</dbReference>
<dbReference type="NCBIfam" id="TIGR00484">
    <property type="entry name" value="EF-G"/>
    <property type="match status" value="1"/>
</dbReference>
<dbReference type="NCBIfam" id="NF009381">
    <property type="entry name" value="PRK12740.1-5"/>
    <property type="match status" value="1"/>
</dbReference>
<dbReference type="NCBIfam" id="TIGR00231">
    <property type="entry name" value="small_GTP"/>
    <property type="match status" value="1"/>
</dbReference>
<dbReference type="PANTHER" id="PTHR43261:SF1">
    <property type="entry name" value="RIBOSOME-RELEASING FACTOR 2, MITOCHONDRIAL"/>
    <property type="match status" value="1"/>
</dbReference>
<dbReference type="PANTHER" id="PTHR43261">
    <property type="entry name" value="TRANSLATION ELONGATION FACTOR G-RELATED"/>
    <property type="match status" value="1"/>
</dbReference>
<dbReference type="Pfam" id="PF00679">
    <property type="entry name" value="EFG_C"/>
    <property type="match status" value="1"/>
</dbReference>
<dbReference type="Pfam" id="PF14492">
    <property type="entry name" value="EFG_III"/>
    <property type="match status" value="1"/>
</dbReference>
<dbReference type="Pfam" id="PF03764">
    <property type="entry name" value="EFG_IV"/>
    <property type="match status" value="1"/>
</dbReference>
<dbReference type="Pfam" id="PF00009">
    <property type="entry name" value="GTP_EFTU"/>
    <property type="match status" value="1"/>
</dbReference>
<dbReference type="Pfam" id="PF03144">
    <property type="entry name" value="GTP_EFTU_D2"/>
    <property type="match status" value="1"/>
</dbReference>
<dbReference type="PRINTS" id="PR00315">
    <property type="entry name" value="ELONGATNFCT"/>
</dbReference>
<dbReference type="SMART" id="SM00838">
    <property type="entry name" value="EFG_C"/>
    <property type="match status" value="1"/>
</dbReference>
<dbReference type="SMART" id="SM00889">
    <property type="entry name" value="EFG_IV"/>
    <property type="match status" value="1"/>
</dbReference>
<dbReference type="SUPFAM" id="SSF54980">
    <property type="entry name" value="EF-G C-terminal domain-like"/>
    <property type="match status" value="2"/>
</dbReference>
<dbReference type="SUPFAM" id="SSF52540">
    <property type="entry name" value="P-loop containing nucleoside triphosphate hydrolases"/>
    <property type="match status" value="1"/>
</dbReference>
<dbReference type="SUPFAM" id="SSF54211">
    <property type="entry name" value="Ribosomal protein S5 domain 2-like"/>
    <property type="match status" value="1"/>
</dbReference>
<dbReference type="SUPFAM" id="SSF50447">
    <property type="entry name" value="Translation proteins"/>
    <property type="match status" value="1"/>
</dbReference>
<dbReference type="PROSITE" id="PS00301">
    <property type="entry name" value="G_TR_1"/>
    <property type="match status" value="1"/>
</dbReference>
<dbReference type="PROSITE" id="PS51722">
    <property type="entry name" value="G_TR_2"/>
    <property type="match status" value="1"/>
</dbReference>
<accession>Q2W2I8</accession>
<organism>
    <name type="scientific">Paramagnetospirillum magneticum (strain ATCC 700264 / AMB-1)</name>
    <name type="common">Magnetospirillum magneticum</name>
    <dbReference type="NCBI Taxonomy" id="342108"/>
    <lineage>
        <taxon>Bacteria</taxon>
        <taxon>Pseudomonadati</taxon>
        <taxon>Pseudomonadota</taxon>
        <taxon>Alphaproteobacteria</taxon>
        <taxon>Rhodospirillales</taxon>
        <taxon>Magnetospirillaceae</taxon>
        <taxon>Paramagnetospirillum</taxon>
    </lineage>
</organism>
<comment type="function">
    <text evidence="1">Catalyzes the GTP-dependent ribosomal translocation step during translation elongation. During this step, the ribosome changes from the pre-translocational (PRE) to the post-translocational (POST) state as the newly formed A-site-bound peptidyl-tRNA and P-site-bound deacylated tRNA move to the P and E sites, respectively. Catalyzes the coordinated movement of the two tRNA molecules, the mRNA and conformational changes in the ribosome.</text>
</comment>
<comment type="subcellular location">
    <subcellularLocation>
        <location evidence="1">Cytoplasm</location>
    </subcellularLocation>
</comment>
<comment type="similarity">
    <text evidence="1">Belongs to the TRAFAC class translation factor GTPase superfamily. Classic translation factor GTPase family. EF-G/EF-2 subfamily.</text>
</comment>
<feature type="chain" id="PRO_0000263466" description="Elongation factor G">
    <location>
        <begin position="1"/>
        <end position="694"/>
    </location>
</feature>
<feature type="domain" description="tr-type G">
    <location>
        <begin position="8"/>
        <end position="283"/>
    </location>
</feature>
<feature type="binding site" evidence="1">
    <location>
        <begin position="17"/>
        <end position="24"/>
    </location>
    <ligand>
        <name>GTP</name>
        <dbReference type="ChEBI" id="CHEBI:37565"/>
    </ligand>
</feature>
<feature type="binding site" evidence="1">
    <location>
        <begin position="81"/>
        <end position="85"/>
    </location>
    <ligand>
        <name>GTP</name>
        <dbReference type="ChEBI" id="CHEBI:37565"/>
    </ligand>
</feature>
<feature type="binding site" evidence="1">
    <location>
        <begin position="135"/>
        <end position="138"/>
    </location>
    <ligand>
        <name>GTP</name>
        <dbReference type="ChEBI" id="CHEBI:37565"/>
    </ligand>
</feature>
<protein>
    <recommendedName>
        <fullName evidence="1">Elongation factor G</fullName>
        <shortName evidence="1">EF-G</shortName>
    </recommendedName>
</protein>
<sequence>MARTTPLERYRNIGIMAHIDAGKTTTTERILYYTGKSYKIGEVHEGTATMDWMEQEQERGITITSAATTAFWRDHRVNIIDTPGHVDFTIEVERSLRVLDGAVTVFDSVAGVEPQSETVWRQADKYGVPRICFVNKMDRIGANFYRCVDMIVDRLGARPLVMHLPIGEESGYIGLVDLLRNVAVIWKDESLGAEFEDQPIPADLVEKAAQYRAQLIETAVEMDDEAMEQYLGGEEPSFEVLQACIRKGTISRTFVPVLCGSAFKNKGVQPLLDAVIDYLPAPVDIPAIKGVKYGTEDEIAKHSTDDEPFAGLAFKIMNDPFVGSLTFVRVYSGVVESGSYIQNTVKEKRERVGRMLLMHANSREEIKEARAGDIVAFAGLKDTTTGDTLCDPTPSSLVVLERMEFPEPVIEVAVEPKSKADQEKMGIALARLAAEDPSFRVTSDVESGQTVIKGMGELHLEILVDRMKREFKVEANVGAPQVAYRETISKAYEVDYTHKKQTGGSGQFARVKIRFEPGEKGAGYVFENKVIGGSVPKEYVPGVDKGIRSAMDNGVIAGFPMIDFKATLTDGAYHDVDSSVLAFEIASRAAFREGIAKAGPKLLEPMMKVEVVTPEDYLGDVIGDLNSRRGQVNDMDQRGNARVITAMVPLANMFGYVNTLRSMSQGRAQYSMTFDHYSEVPQNVSDEIRAKLAG</sequence>
<proteinExistence type="inferred from homology"/>
<gene>
    <name evidence="1" type="primary">fusA</name>
    <name type="ordered locus">amb3133</name>
</gene>
<evidence type="ECO:0000255" key="1">
    <source>
        <dbReference type="HAMAP-Rule" id="MF_00054"/>
    </source>
</evidence>